<evidence type="ECO:0000305" key="1"/>
<gene>
    <name type="primary">ttc4</name>
    <name type="ORF">DDB_G0286253</name>
</gene>
<comment type="similarity">
    <text evidence="1">Belongs to the TTC4 family.</text>
</comment>
<accession>Q54M20</accession>
<proteinExistence type="inferred from homology"/>
<reference key="1">
    <citation type="journal article" date="2005" name="Nature">
        <title>The genome of the social amoeba Dictyostelium discoideum.</title>
        <authorList>
            <person name="Eichinger L."/>
            <person name="Pachebat J.A."/>
            <person name="Gloeckner G."/>
            <person name="Rajandream M.A."/>
            <person name="Sucgang R."/>
            <person name="Berriman M."/>
            <person name="Song J."/>
            <person name="Olsen R."/>
            <person name="Szafranski K."/>
            <person name="Xu Q."/>
            <person name="Tunggal B."/>
            <person name="Kummerfeld S."/>
            <person name="Madera M."/>
            <person name="Konfortov B.A."/>
            <person name="Rivero F."/>
            <person name="Bankier A.T."/>
            <person name="Lehmann R."/>
            <person name="Hamlin N."/>
            <person name="Davies R."/>
            <person name="Gaudet P."/>
            <person name="Fey P."/>
            <person name="Pilcher K."/>
            <person name="Chen G."/>
            <person name="Saunders D."/>
            <person name="Sodergren E.J."/>
            <person name="Davis P."/>
            <person name="Kerhornou A."/>
            <person name="Nie X."/>
            <person name="Hall N."/>
            <person name="Anjard C."/>
            <person name="Hemphill L."/>
            <person name="Bason N."/>
            <person name="Farbrother P."/>
            <person name="Desany B."/>
            <person name="Just E."/>
            <person name="Morio T."/>
            <person name="Rost R."/>
            <person name="Churcher C.M."/>
            <person name="Cooper J."/>
            <person name="Haydock S."/>
            <person name="van Driessche N."/>
            <person name="Cronin A."/>
            <person name="Goodhead I."/>
            <person name="Muzny D.M."/>
            <person name="Mourier T."/>
            <person name="Pain A."/>
            <person name="Lu M."/>
            <person name="Harper D."/>
            <person name="Lindsay R."/>
            <person name="Hauser H."/>
            <person name="James K.D."/>
            <person name="Quiles M."/>
            <person name="Madan Babu M."/>
            <person name="Saito T."/>
            <person name="Buchrieser C."/>
            <person name="Wardroper A."/>
            <person name="Felder M."/>
            <person name="Thangavelu M."/>
            <person name="Johnson D."/>
            <person name="Knights A."/>
            <person name="Loulseged H."/>
            <person name="Mungall K.L."/>
            <person name="Oliver K."/>
            <person name="Price C."/>
            <person name="Quail M.A."/>
            <person name="Urushihara H."/>
            <person name="Hernandez J."/>
            <person name="Rabbinowitsch E."/>
            <person name="Steffen D."/>
            <person name="Sanders M."/>
            <person name="Ma J."/>
            <person name="Kohara Y."/>
            <person name="Sharp S."/>
            <person name="Simmonds M.N."/>
            <person name="Spiegler S."/>
            <person name="Tivey A."/>
            <person name="Sugano S."/>
            <person name="White B."/>
            <person name="Walker D."/>
            <person name="Woodward J.R."/>
            <person name="Winckler T."/>
            <person name="Tanaka Y."/>
            <person name="Shaulsky G."/>
            <person name="Schleicher M."/>
            <person name="Weinstock G.M."/>
            <person name="Rosenthal A."/>
            <person name="Cox E.C."/>
            <person name="Chisholm R.L."/>
            <person name="Gibbs R.A."/>
            <person name="Loomis W.F."/>
            <person name="Platzer M."/>
            <person name="Kay R.R."/>
            <person name="Williams J.G."/>
            <person name="Dear P.H."/>
            <person name="Noegel A.A."/>
            <person name="Barrell B.G."/>
            <person name="Kuspa A."/>
        </authorList>
    </citation>
    <scope>NUCLEOTIDE SEQUENCE [LARGE SCALE GENOMIC DNA]</scope>
    <source>
        <strain>AX4</strain>
    </source>
</reference>
<feature type="chain" id="PRO_0000328162" description="Tetratricopeptide repeat protein 4 homolog">
    <location>
        <begin position="1"/>
        <end position="397"/>
    </location>
</feature>
<feature type="repeat" description="TPR 1">
    <location>
        <begin position="90"/>
        <end position="125"/>
    </location>
</feature>
<feature type="repeat" description="TPR 2">
    <location>
        <begin position="130"/>
        <end position="163"/>
    </location>
</feature>
<feature type="repeat" description="TPR 3">
    <location>
        <begin position="164"/>
        <end position="197"/>
    </location>
</feature>
<organism>
    <name type="scientific">Dictyostelium discoideum</name>
    <name type="common">Social amoeba</name>
    <dbReference type="NCBI Taxonomy" id="44689"/>
    <lineage>
        <taxon>Eukaryota</taxon>
        <taxon>Amoebozoa</taxon>
        <taxon>Evosea</taxon>
        <taxon>Eumycetozoa</taxon>
        <taxon>Dictyostelia</taxon>
        <taxon>Dictyosteliales</taxon>
        <taxon>Dictyosteliaceae</taxon>
        <taxon>Dictyostelium</taxon>
    </lineage>
</organism>
<name>TTC4_DICDI</name>
<dbReference type="EMBL" id="AAFI02000085">
    <property type="protein sequence ID" value="EAL64302.1"/>
    <property type="molecule type" value="Genomic_DNA"/>
</dbReference>
<dbReference type="RefSeq" id="XP_637811.1">
    <property type="nucleotide sequence ID" value="XM_632719.1"/>
</dbReference>
<dbReference type="SMR" id="Q54M20"/>
<dbReference type="FunCoup" id="Q54M20">
    <property type="interactions" value="706"/>
</dbReference>
<dbReference type="STRING" id="44689.Q54M20"/>
<dbReference type="PaxDb" id="44689-DDB0305005"/>
<dbReference type="EnsemblProtists" id="EAL64302">
    <property type="protein sequence ID" value="EAL64302"/>
    <property type="gene ID" value="DDB_G0286253"/>
</dbReference>
<dbReference type="GeneID" id="8625525"/>
<dbReference type="KEGG" id="ddi:DDB_G0286253"/>
<dbReference type="dictyBase" id="DDB_G0286253">
    <property type="gene designation" value="ttc4"/>
</dbReference>
<dbReference type="VEuPathDB" id="AmoebaDB:DDB_G0286253"/>
<dbReference type="eggNOG" id="KOG0551">
    <property type="taxonomic scope" value="Eukaryota"/>
</dbReference>
<dbReference type="HOGENOM" id="CLU_040446_1_0_1"/>
<dbReference type="InParanoid" id="Q54M20"/>
<dbReference type="OMA" id="WRAAQCA"/>
<dbReference type="PhylomeDB" id="Q54M20"/>
<dbReference type="PRO" id="PR:Q54M20"/>
<dbReference type="Proteomes" id="UP000002195">
    <property type="component" value="Chromosome 4"/>
</dbReference>
<dbReference type="GO" id="GO:0005634">
    <property type="term" value="C:nucleus"/>
    <property type="evidence" value="ECO:0000318"/>
    <property type="project" value="GO_Central"/>
</dbReference>
<dbReference type="GO" id="GO:0030544">
    <property type="term" value="F:Hsp70 protein binding"/>
    <property type="evidence" value="ECO:0000318"/>
    <property type="project" value="GO_Central"/>
</dbReference>
<dbReference type="GO" id="GO:0051879">
    <property type="term" value="F:Hsp90 protein binding"/>
    <property type="evidence" value="ECO:0000318"/>
    <property type="project" value="GO_Central"/>
</dbReference>
<dbReference type="GO" id="GO:0006457">
    <property type="term" value="P:protein folding"/>
    <property type="evidence" value="ECO:0000318"/>
    <property type="project" value="GO_Central"/>
</dbReference>
<dbReference type="CDD" id="cd21377">
    <property type="entry name" value="CTWD_Cns1-like"/>
    <property type="match status" value="1"/>
</dbReference>
<dbReference type="Gene3D" id="1.25.40.10">
    <property type="entry name" value="Tetratricopeptide repeat domain"/>
    <property type="match status" value="1"/>
</dbReference>
<dbReference type="InterPro" id="IPR044059">
    <property type="entry name" value="Csn1/TTC4_wheel"/>
</dbReference>
<dbReference type="InterPro" id="IPR011990">
    <property type="entry name" value="TPR-like_helical_dom_sf"/>
</dbReference>
<dbReference type="InterPro" id="IPR019734">
    <property type="entry name" value="TPR_rpt"/>
</dbReference>
<dbReference type="PANTHER" id="PTHR46035">
    <property type="entry name" value="TETRATRICOPEPTIDE REPEAT PROTEIN 4"/>
    <property type="match status" value="1"/>
</dbReference>
<dbReference type="PANTHER" id="PTHR46035:SF1">
    <property type="entry name" value="TETRATRICOPEPTIDE REPEAT PROTEIN 4"/>
    <property type="match status" value="1"/>
</dbReference>
<dbReference type="Pfam" id="PF18972">
    <property type="entry name" value="Wheel"/>
    <property type="match status" value="1"/>
</dbReference>
<dbReference type="SMART" id="SM00028">
    <property type="entry name" value="TPR"/>
    <property type="match status" value="3"/>
</dbReference>
<dbReference type="SUPFAM" id="SSF48452">
    <property type="entry name" value="TPR-like"/>
    <property type="match status" value="1"/>
</dbReference>
<dbReference type="PROSITE" id="PS50293">
    <property type="entry name" value="TPR_REGION"/>
    <property type="match status" value="1"/>
</dbReference>
<keyword id="KW-1185">Reference proteome</keyword>
<keyword id="KW-0677">Repeat</keyword>
<keyword id="KW-0802">TPR repeat</keyword>
<protein>
    <recommendedName>
        <fullName>Tetratricopeptide repeat protein 4 homolog</fullName>
        <shortName>TPR repeat protein 4 homolog</shortName>
    </recommendedName>
</protein>
<sequence>MSTADATGGLTEEEENILWERSVIAWKQQKEERKKSNQELIDRGEKPIDYDNDWKDLPIFMQELPEEPSSNQYLAAFQSLSNDCTPEERAETFKNLGNDYFREGKSRFNDALYYYNKALSVKCNDMTKNSIYLSNRAAINMELGNYGLVIKDCTVSVEFNPLNMKAYSRMARAQLQLSKYQDSIKTCDLGLSHEPTNKDLSTIRENANKKLQDIKKREQDKIDKENQLKQQQQLLATKLYEKNKYKLGHQIFDMSQYTYQSDRKVTIDQNNDVHFPVVFLYPEFGKSDFIMDFQEDHTFGDHLQMMFPPENPEFAPWDTKKEYTMDRIEVYFETNWTKPILSDIKIKEIEKKWIRVKHTTDIAKVISHPTYIIPEIPIFYIVSRGNLFYKKFLENKL</sequence>